<organism>
    <name type="scientific">Escherichia coli (strain UTI89 / UPEC)</name>
    <dbReference type="NCBI Taxonomy" id="364106"/>
    <lineage>
        <taxon>Bacteria</taxon>
        <taxon>Pseudomonadati</taxon>
        <taxon>Pseudomonadota</taxon>
        <taxon>Gammaproteobacteria</taxon>
        <taxon>Enterobacterales</taxon>
        <taxon>Enterobacteriaceae</taxon>
        <taxon>Escherichia</taxon>
    </lineage>
</organism>
<comment type="function">
    <text evidence="1">Involved in the active transport across the outer membrane of iron complexed with catecholate siderophores such as dihydroxybenzoylserine and dihydroxybenzoate. It derives its energy for transport by interacting with the trans-periplasmic membrane protein TonB. Can also transport catechol-substituted cephalosporins. Receptor for microcins M, H47 and E492 (By similarity).</text>
</comment>
<comment type="subcellular location">
    <subcellularLocation>
        <location evidence="3">Cell outer membrane</location>
        <topology evidence="3">Multi-pass membrane protein</topology>
    </subcellularLocation>
</comment>
<comment type="similarity">
    <text evidence="4">Belongs to the TonB-dependent receptor family.</text>
</comment>
<proteinExistence type="inferred from homology"/>
<keyword id="KW-0998">Cell outer membrane</keyword>
<keyword id="KW-0406">Ion transport</keyword>
<keyword id="KW-0408">Iron</keyword>
<keyword id="KW-0410">Iron transport</keyword>
<keyword id="KW-0472">Membrane</keyword>
<keyword id="KW-0675">Receptor</keyword>
<keyword id="KW-0732">Signal</keyword>
<keyword id="KW-0798">TonB box</keyword>
<keyword id="KW-0812">Transmembrane</keyword>
<keyword id="KW-1134">Transmembrane beta strand</keyword>
<keyword id="KW-0813">Transport</keyword>
<reference key="1">
    <citation type="journal article" date="2006" name="Proc. Natl. Acad. Sci. U.S.A.">
        <title>Identification of genes subject to positive selection in uropathogenic strains of Escherichia coli: a comparative genomics approach.</title>
        <authorList>
            <person name="Chen S.L."/>
            <person name="Hung C.-S."/>
            <person name="Xu J."/>
            <person name="Reigstad C.S."/>
            <person name="Magrini V."/>
            <person name="Sabo A."/>
            <person name="Blasiar D."/>
            <person name="Bieri T."/>
            <person name="Meyer R.R."/>
            <person name="Ozersky P."/>
            <person name="Armstrong J.R."/>
            <person name="Fulton R.S."/>
            <person name="Latreille J.P."/>
            <person name="Spieth J."/>
            <person name="Hooton T.M."/>
            <person name="Mardis E.R."/>
            <person name="Hultgren S.J."/>
            <person name="Gordon J.I."/>
        </authorList>
    </citation>
    <scope>NUCLEOTIDE SEQUENCE [LARGE SCALE GENOMIC DNA]</scope>
    <source>
        <strain>UTI89 / UPEC</strain>
    </source>
</reference>
<sequence length="760" mass="81898">MENNRNFPARQFHSLTFFAGLCIGITPVAQALAAEGQANADDTLVVEASTPSLYAPQQSADPKFSRPVADTTRTMTVISEQVIKDQGATNLTDALKNVPGVGAFFAGENGNSTTGDAIYMRGADTSNSIYIDGIRDIGSVSRDTFNTEQVEVIKGPSGTDYGRSAPTGSINMISKQPRNDSGIDASASIGSAWFRRGTLDVNQVIGDTTAVRLNVMGEKTHDAGRDKVKNERYGVAPSVAFGLGTANRLYLNYLHVTQHNTPDGGIPTIGLPGYSAPSAGTAALNHSGKVDTHNFYGTDSDYDDSTTDTATMRFEHDINDNTTIRNTTRWSRVKQDYLMTAIMGGASNITQPTSDVNSWTWSRTANTKDVSNKILTNQTNLTSTFYTGAIGHDVSTGVEFTRETQTNYGVNPVTLPAVNIYHPDSSIHPGGLTRNGANANGQTDTFAIYAFDTLQITRDFELNGGIRLDNYHTEYDSATACGGSGRGAITCPAGVAKGSPVTTVDTAKSGNLVNWKAGALYHLTENGNIYINYAVSQQPPGGNNFALAQSGSGNSANRTDFKPQKANTSEIGTKWQVLDKRLLLTAALFRTDIENEVEQNDDGTYSQYGKKRVEGYEISVAGNITPAWQMIGGYTQQKATIKNGKDVAQDGSSSLPYTPEHAFTLWSQYQATDDISVGAGARYIGSMHKGSDGAVGTPAFTEGYWVADAKLGYRVNRNLDFQLNVYNLFDTDYVASINKSGYRYHPGEPRTFLLTANMHF</sequence>
<protein>
    <recommendedName>
        <fullName>Catecholate siderophore receptor Fiu</fullName>
    </recommendedName>
    <alternativeName>
        <fullName>Ferric iron uptake protein</fullName>
    </alternativeName>
    <alternativeName>
        <fullName>TonB-dependent receptor Fiu</fullName>
    </alternativeName>
</protein>
<name>FIU_ECOUT</name>
<accession>Q1REC0</accession>
<feature type="signal peptide" evidence="2">
    <location>
        <begin position="1"/>
        <end position="31"/>
    </location>
</feature>
<feature type="chain" id="PRO_0000248083" description="Catecholate siderophore receptor Fiu">
    <location>
        <begin position="32"/>
        <end position="760"/>
    </location>
</feature>
<feature type="domain" description="TBDR plug" evidence="3">
    <location>
        <begin position="67"/>
        <end position="175"/>
    </location>
</feature>
<feature type="domain" description="TBDR beta-barrel" evidence="3">
    <location>
        <begin position="180"/>
        <end position="760"/>
    </location>
</feature>
<feature type="short sequence motif" description="TonB C-terminal box" evidence="1">
    <location>
        <begin position="743"/>
        <end position="760"/>
    </location>
</feature>
<gene>
    <name type="primary">fiu</name>
    <name type="ordered locus">UTI89_C0808</name>
</gene>
<dbReference type="EMBL" id="CP000243">
    <property type="protein sequence ID" value="ABE06294.1"/>
    <property type="molecule type" value="Genomic_DNA"/>
</dbReference>
<dbReference type="RefSeq" id="WP_000430008.1">
    <property type="nucleotide sequence ID" value="NZ_CP064825.1"/>
</dbReference>
<dbReference type="SMR" id="Q1REC0"/>
<dbReference type="KEGG" id="eci:UTI89_C0808"/>
<dbReference type="HOGENOM" id="CLU_008287_9_1_6"/>
<dbReference type="Proteomes" id="UP000001952">
    <property type="component" value="Chromosome"/>
</dbReference>
<dbReference type="GO" id="GO:0009279">
    <property type="term" value="C:cell outer membrane"/>
    <property type="evidence" value="ECO:0007669"/>
    <property type="project" value="UniProtKB-SubCell"/>
</dbReference>
<dbReference type="GO" id="GO:0015344">
    <property type="term" value="F:siderophore uptake transmembrane transporter activity"/>
    <property type="evidence" value="ECO:0007669"/>
    <property type="project" value="TreeGrafter"/>
</dbReference>
<dbReference type="GO" id="GO:0038023">
    <property type="term" value="F:signaling receptor activity"/>
    <property type="evidence" value="ECO:0007669"/>
    <property type="project" value="InterPro"/>
</dbReference>
<dbReference type="CDD" id="cd01347">
    <property type="entry name" value="ligand_gated_channel"/>
    <property type="match status" value="1"/>
</dbReference>
<dbReference type="FunFam" id="2.40.170.20:FF:000006">
    <property type="entry name" value="Catecholate siderophore receptor fiu"/>
    <property type="match status" value="1"/>
</dbReference>
<dbReference type="FunFam" id="2.170.130.10:FF:000001">
    <property type="entry name" value="Catecholate siderophore TonB-dependent receptor"/>
    <property type="match status" value="1"/>
</dbReference>
<dbReference type="Gene3D" id="2.40.170.20">
    <property type="entry name" value="TonB-dependent receptor, beta-barrel domain"/>
    <property type="match status" value="1"/>
</dbReference>
<dbReference type="Gene3D" id="2.170.130.10">
    <property type="entry name" value="TonB-dependent receptor, plug domain"/>
    <property type="match status" value="1"/>
</dbReference>
<dbReference type="InterPro" id="IPR012910">
    <property type="entry name" value="Plug_dom"/>
</dbReference>
<dbReference type="InterPro" id="IPR037066">
    <property type="entry name" value="Plug_dom_sf"/>
</dbReference>
<dbReference type="InterPro" id="IPR039426">
    <property type="entry name" value="TonB-dep_rcpt-like"/>
</dbReference>
<dbReference type="InterPro" id="IPR000531">
    <property type="entry name" value="TonB-dep_rcpt_b-brl"/>
</dbReference>
<dbReference type="InterPro" id="IPR010916">
    <property type="entry name" value="TonB_box_CS"/>
</dbReference>
<dbReference type="InterPro" id="IPR036942">
    <property type="entry name" value="TonB_rcpt_b-brl_sf"/>
</dbReference>
<dbReference type="InterPro" id="IPR010105">
    <property type="entry name" value="TonB_sidphr_rcpt"/>
</dbReference>
<dbReference type="NCBIfam" id="NF007349">
    <property type="entry name" value="PRK09840.1"/>
    <property type="match status" value="1"/>
</dbReference>
<dbReference type="NCBIfam" id="TIGR01783">
    <property type="entry name" value="TonB-siderophor"/>
    <property type="match status" value="1"/>
</dbReference>
<dbReference type="PANTHER" id="PTHR32552:SF89">
    <property type="entry name" value="CATECHOLATE SIDEROPHORE RECEPTOR FIU"/>
    <property type="match status" value="1"/>
</dbReference>
<dbReference type="PANTHER" id="PTHR32552">
    <property type="entry name" value="FERRICHROME IRON RECEPTOR-RELATED"/>
    <property type="match status" value="1"/>
</dbReference>
<dbReference type="Pfam" id="PF07715">
    <property type="entry name" value="Plug"/>
    <property type="match status" value="1"/>
</dbReference>
<dbReference type="Pfam" id="PF00593">
    <property type="entry name" value="TonB_dep_Rec_b-barrel"/>
    <property type="match status" value="1"/>
</dbReference>
<dbReference type="SUPFAM" id="SSF56935">
    <property type="entry name" value="Porins"/>
    <property type="match status" value="1"/>
</dbReference>
<dbReference type="PROSITE" id="PS00430">
    <property type="entry name" value="TONB_DEPENDENT_REC_1"/>
    <property type="match status" value="1"/>
</dbReference>
<dbReference type="PROSITE" id="PS52016">
    <property type="entry name" value="TONB_DEPENDENT_REC_3"/>
    <property type="match status" value="1"/>
</dbReference>
<evidence type="ECO:0000250" key="1"/>
<evidence type="ECO:0000255" key="2"/>
<evidence type="ECO:0000255" key="3">
    <source>
        <dbReference type="PROSITE-ProRule" id="PRU01360"/>
    </source>
</evidence>
<evidence type="ECO:0000305" key="4"/>